<organism>
    <name type="scientific">Homo sapiens</name>
    <name type="common">Human</name>
    <dbReference type="NCBI Taxonomy" id="9606"/>
    <lineage>
        <taxon>Eukaryota</taxon>
        <taxon>Metazoa</taxon>
        <taxon>Chordata</taxon>
        <taxon>Craniata</taxon>
        <taxon>Vertebrata</taxon>
        <taxon>Euteleostomi</taxon>
        <taxon>Mammalia</taxon>
        <taxon>Eutheria</taxon>
        <taxon>Euarchontoglires</taxon>
        <taxon>Primates</taxon>
        <taxon>Haplorrhini</taxon>
        <taxon>Catarrhini</taxon>
        <taxon>Hominidae</taxon>
        <taxon>Homo</taxon>
    </lineage>
</organism>
<dbReference type="EMBL" id="AC012640">
    <property type="status" value="NOT_ANNOTATED_CDS"/>
    <property type="molecule type" value="Genomic_DNA"/>
</dbReference>
<dbReference type="EMBL" id="BC032907">
    <property type="status" value="NOT_ANNOTATED_CDS"/>
    <property type="molecule type" value="mRNA"/>
</dbReference>
<dbReference type="FunCoup" id="P0DW81">
    <property type="interactions" value="35"/>
</dbReference>
<dbReference type="AGR" id="HGNC:56238"/>
<dbReference type="GeneCards" id="MARCHF6-DT"/>
<dbReference type="HGNC" id="HGNC:56238">
    <property type="gene designation" value="MARCHF6-DT"/>
</dbReference>
<dbReference type="PRO" id="PR:P0DW81"/>
<dbReference type="Proteomes" id="UP000005640">
    <property type="component" value="Chromosome 5"/>
</dbReference>
<dbReference type="GO" id="GO:0005730">
    <property type="term" value="C:nucleolus"/>
    <property type="evidence" value="ECO:0000314"/>
    <property type="project" value="UniProtKB"/>
</dbReference>
<dbReference type="GO" id="GO:0090734">
    <property type="term" value="C:site of DNA damage"/>
    <property type="evidence" value="ECO:0000314"/>
    <property type="project" value="UniProtKB"/>
</dbReference>
<dbReference type="GO" id="GO:0072572">
    <property type="term" value="F:poly-ADP-D-ribose binding"/>
    <property type="evidence" value="ECO:0000314"/>
    <property type="project" value="UniProtKB"/>
</dbReference>
<dbReference type="GO" id="GO:0031397">
    <property type="term" value="P:negative regulation of protein ubiquitination"/>
    <property type="evidence" value="ECO:0000314"/>
    <property type="project" value="UniProtKB"/>
</dbReference>
<dbReference type="GO" id="GO:0045739">
    <property type="term" value="P:positive regulation of DNA repair"/>
    <property type="evidence" value="ECO:0000314"/>
    <property type="project" value="UniProtKB"/>
</dbReference>
<dbReference type="GO" id="GO:0010835">
    <property type="term" value="P:regulation of protein ADP-ribosylation"/>
    <property type="evidence" value="ECO:0000314"/>
    <property type="project" value="UniProtKB"/>
</dbReference>
<dbReference type="InterPro" id="IPR057239">
    <property type="entry name" value="PACMP"/>
</dbReference>
<dbReference type="Pfam" id="PF23699">
    <property type="entry name" value="PACMP"/>
    <property type="match status" value="1"/>
</dbReference>
<proteinExistence type="evidence at protein level"/>
<name>PACMP_HUMAN</name>
<protein>
    <recommendedName>
        <fullName evidence="4">Poly-ADP-ribosylation-amplifying and CtIP-maintaining micropeptide</fullName>
        <shortName evidence="3">PAR-amplifying and CtIP-maintaining micropeptide</shortName>
    </recommendedName>
</protein>
<accession>P0DW81</accession>
<reference key="1">
    <citation type="journal article" date="2004" name="Nature">
        <title>The DNA sequence and comparative analysis of human chromosome 5.</title>
        <authorList>
            <person name="Schmutz J."/>
            <person name="Martin J."/>
            <person name="Terry A."/>
            <person name="Couronne O."/>
            <person name="Grimwood J."/>
            <person name="Lowry S."/>
            <person name="Gordon L.A."/>
            <person name="Scott D."/>
            <person name="Xie G."/>
            <person name="Huang W."/>
            <person name="Hellsten U."/>
            <person name="Tran-Gyamfi M."/>
            <person name="She X."/>
            <person name="Prabhakar S."/>
            <person name="Aerts A."/>
            <person name="Altherr M."/>
            <person name="Bajorek E."/>
            <person name="Black S."/>
            <person name="Branscomb E."/>
            <person name="Caoile C."/>
            <person name="Challacombe J.F."/>
            <person name="Chan Y.M."/>
            <person name="Denys M."/>
            <person name="Detter J.C."/>
            <person name="Escobar J."/>
            <person name="Flowers D."/>
            <person name="Fotopulos D."/>
            <person name="Glavina T."/>
            <person name="Gomez M."/>
            <person name="Gonzales E."/>
            <person name="Goodstein D."/>
            <person name="Grigoriev I."/>
            <person name="Groza M."/>
            <person name="Hammon N."/>
            <person name="Hawkins T."/>
            <person name="Haydu L."/>
            <person name="Israni S."/>
            <person name="Jett J."/>
            <person name="Kadner K."/>
            <person name="Kimball H."/>
            <person name="Kobayashi A."/>
            <person name="Lopez F."/>
            <person name="Lou Y."/>
            <person name="Martinez D."/>
            <person name="Medina C."/>
            <person name="Morgan J."/>
            <person name="Nandkeshwar R."/>
            <person name="Noonan J.P."/>
            <person name="Pitluck S."/>
            <person name="Pollard M."/>
            <person name="Predki P."/>
            <person name="Priest J."/>
            <person name="Ramirez L."/>
            <person name="Retterer J."/>
            <person name="Rodriguez A."/>
            <person name="Rogers S."/>
            <person name="Salamov A."/>
            <person name="Salazar A."/>
            <person name="Thayer N."/>
            <person name="Tice H."/>
            <person name="Tsai M."/>
            <person name="Ustaszewska A."/>
            <person name="Vo N."/>
            <person name="Wheeler J."/>
            <person name="Wu K."/>
            <person name="Yang J."/>
            <person name="Dickson M."/>
            <person name="Cheng J.-F."/>
            <person name="Eichler E.E."/>
            <person name="Olsen A."/>
            <person name="Pennacchio L.A."/>
            <person name="Rokhsar D.S."/>
            <person name="Richardson P."/>
            <person name="Lucas S.M."/>
            <person name="Myers R.M."/>
            <person name="Rubin E.M."/>
        </authorList>
    </citation>
    <scope>NUCLEOTIDE SEQUENCE [LARGE SCALE GENOMIC DNA]</scope>
</reference>
<reference key="2">
    <citation type="journal article" date="2004" name="Genome Res.">
        <title>The status, quality, and expansion of the NIH full-length cDNA project: the Mammalian Gene Collection (MGC).</title>
        <authorList>
            <consortium name="The MGC Project Team"/>
        </authorList>
    </citation>
    <scope>NUCLEOTIDE SEQUENCE [LARGE SCALE MRNA]</scope>
</reference>
<reference key="3">
    <citation type="journal article" date="2022" name="Mol. Cell">
        <title>Micropeptide PACMP inhibition elicits synthetic lethal effects by decreasing CtIP and poly(ADP-ribosyl)ation.</title>
        <authorList>
            <person name="Zhang C."/>
            <person name="Zhou B."/>
            <person name="Gu F."/>
            <person name="Liu H."/>
            <person name="Wu H."/>
            <person name="Yao F."/>
            <person name="Zheng H."/>
            <person name="Fu H."/>
            <person name="Chong W."/>
            <person name="Cai S."/>
            <person name="Huang M."/>
            <person name="Ma X."/>
            <person name="Guo Z."/>
            <person name="Li T."/>
            <person name="Deng W."/>
            <person name="Zheng M."/>
            <person name="Ji Q."/>
            <person name="Zhao Y."/>
            <person name="Ma Y."/>
            <person name="Wang Q.E."/>
            <person name="Tang T.S."/>
            <person name="Guo C."/>
        </authorList>
    </citation>
    <scope>FUNCTION</scope>
    <scope>SUBCELLULAR LOCATION</scope>
    <scope>INTERACTION WITH KLHL15 AND PARP1</scope>
    <scope>MUTAGENESIS OF 23-ARG--ARG-42 AND 38-ARG--ARG-42</scope>
</reference>
<comment type="function">
    <text evidence="2">Micropeptide that acts as a regulator of DNA repair both by preventing KLHL15-mediated ubiquitination and degradation of RBBP8/CtIP, and by promoting the poly-ADP-ribosyltransferase activity of PARP1 (PubMed:35219381). Prevents KLHL15-mediated ubiquitination of RBBP8/CtIP by competitively blocking the association between KLHL15 and RBBP8/CtIP (PubMed:35219381). Recruited to DNA damage sites via association with poly-ADP-ribose chains, and enhances the poly-ADP-ribosyltransferase activity of PARP1 (PubMed:35219381).</text>
</comment>
<comment type="subunit">
    <text evidence="2">Interacts with KLHL15; preventing ubiquitination and degradation of RBBP8/CtIP (PubMed:35219381). Interacts with PARP1 (PubMed:35219381).</text>
</comment>
<comment type="subcellular location">
    <subcellularLocation>
        <location evidence="2">Nucleus</location>
        <location evidence="2">Nucleolus</location>
    </subcellularLocation>
    <subcellularLocation>
        <location evidence="2">Chromosome</location>
    </subcellularLocation>
    <text evidence="2">Recruited to DNA damage sites via interaction with poly-ADP-ribose chains.</text>
</comment>
<evidence type="ECO:0000256" key="1">
    <source>
        <dbReference type="SAM" id="MobiDB-lite"/>
    </source>
</evidence>
<evidence type="ECO:0000269" key="2">
    <source>
    </source>
</evidence>
<evidence type="ECO:0000303" key="3">
    <source>
    </source>
</evidence>
<evidence type="ECO:0000305" key="4"/>
<evidence type="ECO:0000312" key="5">
    <source>
        <dbReference type="HGNC" id="HGNC:56238"/>
    </source>
</evidence>
<sequence>MAASGGTKKAQSGGRRLREPSSRPSRRARQRPRRGALRKAGRFL</sequence>
<feature type="chain" id="PRO_0000456368" description="Poly-ADP-ribosylation-amplifying and CtIP-maintaining micropeptide">
    <location>
        <begin position="1"/>
        <end position="44"/>
    </location>
</feature>
<feature type="region of interest" description="Disordered" evidence="1">
    <location>
        <begin position="1"/>
        <end position="44"/>
    </location>
</feature>
<feature type="compositionally biased region" description="Basic residues" evidence="1">
    <location>
        <begin position="24"/>
        <end position="44"/>
    </location>
</feature>
<feature type="mutagenesis site" description="In 10A mutant; impaired binding to poly-ADP-ribose chains." evidence="2">
    <original>RPSRRARQRPRRGALRKAGR</original>
    <variation>APSAAAAQAPAAGALRAAGA</variation>
    <location>
        <begin position="23"/>
        <end position="42"/>
    </location>
</feature>
<feature type="mutagenesis site" description="In 4A mutant; impaired binding to poly-ADP-ribose chains." evidence="2">
    <original>RKAGR</original>
    <variation>AAAGA</variation>
    <location>
        <begin position="38"/>
        <end position="42"/>
    </location>
</feature>
<gene>
    <name evidence="5" type="primary">MARCHF6-DT</name>
    <name evidence="3" type="synonym">PACMP</name>
</gene>
<keyword id="KW-0158">Chromosome</keyword>
<keyword id="KW-0539">Nucleus</keyword>
<keyword id="KW-1185">Reference proteome</keyword>